<reference key="1">
    <citation type="submission" date="2009-01" db="EMBL/GenBank/DDBJ databases">
        <title>Complete sequence of chromosome of Arthrobacter chlorophenolicus A6.</title>
        <authorList>
            <consortium name="US DOE Joint Genome Institute"/>
            <person name="Lucas S."/>
            <person name="Copeland A."/>
            <person name="Lapidus A."/>
            <person name="Glavina del Rio T."/>
            <person name="Tice H."/>
            <person name="Bruce D."/>
            <person name="Goodwin L."/>
            <person name="Pitluck S."/>
            <person name="Goltsman E."/>
            <person name="Clum A."/>
            <person name="Larimer F."/>
            <person name="Land M."/>
            <person name="Hauser L."/>
            <person name="Kyrpides N."/>
            <person name="Mikhailova N."/>
            <person name="Jansson J."/>
            <person name="Richardson P."/>
        </authorList>
    </citation>
    <scope>NUCLEOTIDE SEQUENCE [LARGE SCALE GENOMIC DNA]</scope>
    <source>
        <strain>ATCC 700700 / DSM 12829 / CIP 107037 / JCM 12360 / KCTC 9906 / NCIMB 13794 / A6</strain>
    </source>
</reference>
<protein>
    <recommendedName>
        <fullName evidence="1">Small ribosomal subunit protein uS3</fullName>
    </recommendedName>
    <alternativeName>
        <fullName evidence="3">30S ribosomal protein S3</fullName>
    </alternativeName>
</protein>
<evidence type="ECO:0000255" key="1">
    <source>
        <dbReference type="HAMAP-Rule" id="MF_01309"/>
    </source>
</evidence>
<evidence type="ECO:0000256" key="2">
    <source>
        <dbReference type="SAM" id="MobiDB-lite"/>
    </source>
</evidence>
<evidence type="ECO:0000305" key="3"/>
<dbReference type="EMBL" id="CP001341">
    <property type="protein sequence ID" value="ACL40646.1"/>
    <property type="molecule type" value="Genomic_DNA"/>
</dbReference>
<dbReference type="RefSeq" id="WP_015937849.1">
    <property type="nucleotide sequence ID" value="NC_011886.1"/>
</dbReference>
<dbReference type="SMR" id="B8HD00"/>
<dbReference type="STRING" id="452863.Achl_2681"/>
<dbReference type="KEGG" id="ach:Achl_2681"/>
<dbReference type="eggNOG" id="COG0092">
    <property type="taxonomic scope" value="Bacteria"/>
</dbReference>
<dbReference type="HOGENOM" id="CLU_058591_0_2_11"/>
<dbReference type="OrthoDB" id="9806396at2"/>
<dbReference type="Proteomes" id="UP000002505">
    <property type="component" value="Chromosome"/>
</dbReference>
<dbReference type="GO" id="GO:0022627">
    <property type="term" value="C:cytosolic small ribosomal subunit"/>
    <property type="evidence" value="ECO:0007669"/>
    <property type="project" value="TreeGrafter"/>
</dbReference>
<dbReference type="GO" id="GO:0003729">
    <property type="term" value="F:mRNA binding"/>
    <property type="evidence" value="ECO:0007669"/>
    <property type="project" value="UniProtKB-UniRule"/>
</dbReference>
<dbReference type="GO" id="GO:0019843">
    <property type="term" value="F:rRNA binding"/>
    <property type="evidence" value="ECO:0007669"/>
    <property type="project" value="UniProtKB-UniRule"/>
</dbReference>
<dbReference type="GO" id="GO:0003735">
    <property type="term" value="F:structural constituent of ribosome"/>
    <property type="evidence" value="ECO:0007669"/>
    <property type="project" value="InterPro"/>
</dbReference>
<dbReference type="GO" id="GO:0006412">
    <property type="term" value="P:translation"/>
    <property type="evidence" value="ECO:0007669"/>
    <property type="project" value="UniProtKB-UniRule"/>
</dbReference>
<dbReference type="CDD" id="cd02412">
    <property type="entry name" value="KH-II_30S_S3"/>
    <property type="match status" value="1"/>
</dbReference>
<dbReference type="FunFam" id="3.30.1140.32:FF:000002">
    <property type="entry name" value="30S ribosomal protein S3"/>
    <property type="match status" value="1"/>
</dbReference>
<dbReference type="FunFam" id="3.30.300.20:FF:000001">
    <property type="entry name" value="30S ribosomal protein S3"/>
    <property type="match status" value="1"/>
</dbReference>
<dbReference type="Gene3D" id="3.30.300.20">
    <property type="match status" value="1"/>
</dbReference>
<dbReference type="Gene3D" id="3.30.1140.32">
    <property type="entry name" value="Ribosomal protein S3, C-terminal domain"/>
    <property type="match status" value="1"/>
</dbReference>
<dbReference type="HAMAP" id="MF_01309_B">
    <property type="entry name" value="Ribosomal_uS3_B"/>
    <property type="match status" value="1"/>
</dbReference>
<dbReference type="InterPro" id="IPR004087">
    <property type="entry name" value="KH_dom"/>
</dbReference>
<dbReference type="InterPro" id="IPR015946">
    <property type="entry name" value="KH_dom-like_a/b"/>
</dbReference>
<dbReference type="InterPro" id="IPR004044">
    <property type="entry name" value="KH_dom_type_2"/>
</dbReference>
<dbReference type="InterPro" id="IPR009019">
    <property type="entry name" value="KH_sf_prok-type"/>
</dbReference>
<dbReference type="InterPro" id="IPR036419">
    <property type="entry name" value="Ribosomal_S3_C_sf"/>
</dbReference>
<dbReference type="InterPro" id="IPR005704">
    <property type="entry name" value="Ribosomal_uS3_bac-typ"/>
</dbReference>
<dbReference type="InterPro" id="IPR001351">
    <property type="entry name" value="Ribosomal_uS3_C"/>
</dbReference>
<dbReference type="InterPro" id="IPR018280">
    <property type="entry name" value="Ribosomal_uS3_CS"/>
</dbReference>
<dbReference type="NCBIfam" id="TIGR01009">
    <property type="entry name" value="rpsC_bact"/>
    <property type="match status" value="1"/>
</dbReference>
<dbReference type="PANTHER" id="PTHR11760">
    <property type="entry name" value="30S/40S RIBOSOMAL PROTEIN S3"/>
    <property type="match status" value="1"/>
</dbReference>
<dbReference type="PANTHER" id="PTHR11760:SF19">
    <property type="entry name" value="SMALL RIBOSOMAL SUBUNIT PROTEIN US3C"/>
    <property type="match status" value="1"/>
</dbReference>
<dbReference type="Pfam" id="PF07650">
    <property type="entry name" value="KH_2"/>
    <property type="match status" value="1"/>
</dbReference>
<dbReference type="Pfam" id="PF00189">
    <property type="entry name" value="Ribosomal_S3_C"/>
    <property type="match status" value="1"/>
</dbReference>
<dbReference type="SMART" id="SM00322">
    <property type="entry name" value="KH"/>
    <property type="match status" value="1"/>
</dbReference>
<dbReference type="SUPFAM" id="SSF54814">
    <property type="entry name" value="Prokaryotic type KH domain (KH-domain type II)"/>
    <property type="match status" value="1"/>
</dbReference>
<dbReference type="SUPFAM" id="SSF54821">
    <property type="entry name" value="Ribosomal protein S3 C-terminal domain"/>
    <property type="match status" value="1"/>
</dbReference>
<dbReference type="PROSITE" id="PS50823">
    <property type="entry name" value="KH_TYPE_2"/>
    <property type="match status" value="1"/>
</dbReference>
<dbReference type="PROSITE" id="PS00548">
    <property type="entry name" value="RIBOSOMAL_S3"/>
    <property type="match status" value="1"/>
</dbReference>
<keyword id="KW-0687">Ribonucleoprotein</keyword>
<keyword id="KW-0689">Ribosomal protein</keyword>
<keyword id="KW-0694">RNA-binding</keyword>
<keyword id="KW-0699">rRNA-binding</keyword>
<sequence>MGQKVNPHGFRLGITTDHVSHWFADSTKSGQRYKDFVREDIRIRQLMSTGMERAGIAKVEIERTRDRVRVDIHTARPGIVIGRRGAEADRIRGELEKLTGKQVQLNILEVKNPEMEAQLVAQGVAEQLTSRVAFRRAMKKAMQSAQRAGAKGIRIACSGRLGGAEMSRSEFYREGRVPLHTLRANIDYGFYEAKTTFGRIGVKVWIYKGDVTAKELAAQAASAPSRGPRSDRGGRPGGADRGDRRRRNDRPAADAAPAAEAPAVEAAPAAAEGGQA</sequence>
<gene>
    <name evidence="1" type="primary">rpsC</name>
    <name type="ordered locus">Achl_2681</name>
</gene>
<name>RS3_PSECP</name>
<organism>
    <name type="scientific">Pseudarthrobacter chlorophenolicus (strain ATCC 700700 / DSM 12829 / CIP 107037 / JCM 12360 / KCTC 9906 / NCIMB 13794 / A6)</name>
    <name type="common">Arthrobacter chlorophenolicus</name>
    <dbReference type="NCBI Taxonomy" id="452863"/>
    <lineage>
        <taxon>Bacteria</taxon>
        <taxon>Bacillati</taxon>
        <taxon>Actinomycetota</taxon>
        <taxon>Actinomycetes</taxon>
        <taxon>Micrococcales</taxon>
        <taxon>Micrococcaceae</taxon>
        <taxon>Pseudarthrobacter</taxon>
    </lineage>
</organism>
<proteinExistence type="inferred from homology"/>
<comment type="function">
    <text evidence="1">Binds the lower part of the 30S subunit head. Binds mRNA in the 70S ribosome, positioning it for translation.</text>
</comment>
<comment type="subunit">
    <text evidence="1">Part of the 30S ribosomal subunit. Forms a tight complex with proteins S10 and S14.</text>
</comment>
<comment type="similarity">
    <text evidence="1">Belongs to the universal ribosomal protein uS3 family.</text>
</comment>
<feature type="chain" id="PRO_1000165476" description="Small ribosomal subunit protein uS3">
    <location>
        <begin position="1"/>
        <end position="276"/>
    </location>
</feature>
<feature type="domain" description="KH type-2" evidence="1">
    <location>
        <begin position="43"/>
        <end position="111"/>
    </location>
</feature>
<feature type="region of interest" description="Disordered" evidence="2">
    <location>
        <begin position="218"/>
        <end position="276"/>
    </location>
</feature>
<feature type="compositionally biased region" description="Low complexity" evidence="2">
    <location>
        <begin position="218"/>
        <end position="227"/>
    </location>
</feature>
<feature type="compositionally biased region" description="Basic and acidic residues" evidence="2">
    <location>
        <begin position="228"/>
        <end position="243"/>
    </location>
</feature>
<feature type="compositionally biased region" description="Low complexity" evidence="2">
    <location>
        <begin position="253"/>
        <end position="276"/>
    </location>
</feature>
<accession>B8HD00</accession>